<dbReference type="EMBL" id="CP001291">
    <property type="protein sequence ID" value="ACK69204.1"/>
    <property type="molecule type" value="Genomic_DNA"/>
</dbReference>
<dbReference type="RefSeq" id="WP_012598151.1">
    <property type="nucleotide sequence ID" value="NC_011729.1"/>
</dbReference>
<dbReference type="STRING" id="65393.PCC7424_0748"/>
<dbReference type="KEGG" id="cyc:PCC7424_0748"/>
<dbReference type="eggNOG" id="COG4399">
    <property type="taxonomic scope" value="Bacteria"/>
</dbReference>
<dbReference type="HOGENOM" id="CLU_042384_0_0_3"/>
<dbReference type="OrthoDB" id="9787430at2"/>
<dbReference type="Proteomes" id="UP000002384">
    <property type="component" value="Chromosome"/>
</dbReference>
<dbReference type="GO" id="GO:0005886">
    <property type="term" value="C:plasma membrane"/>
    <property type="evidence" value="ECO:0007669"/>
    <property type="project" value="UniProtKB-SubCell"/>
</dbReference>
<dbReference type="InterPro" id="IPR007383">
    <property type="entry name" value="DUF445"/>
</dbReference>
<dbReference type="InterPro" id="IPR016991">
    <property type="entry name" value="UCP032178"/>
</dbReference>
<dbReference type="PANTHER" id="PTHR35791">
    <property type="entry name" value="UPF0754 MEMBRANE PROTEIN YHEB"/>
    <property type="match status" value="1"/>
</dbReference>
<dbReference type="PANTHER" id="PTHR35791:SF1">
    <property type="entry name" value="UPF0754 MEMBRANE PROTEIN YHEB"/>
    <property type="match status" value="1"/>
</dbReference>
<dbReference type="Pfam" id="PF04286">
    <property type="entry name" value="DUF445"/>
    <property type="match status" value="1"/>
</dbReference>
<dbReference type="PIRSF" id="PIRSF032178">
    <property type="entry name" value="UCP032178"/>
    <property type="match status" value="1"/>
</dbReference>
<feature type="chain" id="PRO_0000388288" description="UPF0754 membrane protein PCC7424_0748">
    <location>
        <begin position="1"/>
        <end position="413"/>
    </location>
</feature>
<feature type="transmembrane region" description="Helical" evidence="2">
    <location>
        <begin position="3"/>
        <end position="23"/>
    </location>
</feature>
<feature type="transmembrane region" description="Helical" evidence="2">
    <location>
        <begin position="391"/>
        <end position="411"/>
    </location>
</feature>
<comment type="subcellular location">
    <subcellularLocation>
        <location evidence="1">Cell inner membrane</location>
        <topology evidence="1">Multi-pass membrane protein</topology>
    </subcellularLocation>
</comment>
<comment type="similarity">
    <text evidence="3">Belongs to the UPF0754 family.</text>
</comment>
<accession>B7KG11</accession>
<evidence type="ECO:0000250" key="1"/>
<evidence type="ECO:0000255" key="2"/>
<evidence type="ECO:0000305" key="3"/>
<proteinExistence type="inferred from homology"/>
<protein>
    <recommendedName>
        <fullName>UPF0754 membrane protein PCC7424_0748</fullName>
    </recommendedName>
</protein>
<name>Y748_GLOC7</name>
<sequence length="413" mass="47447">MLIALELSTIWTIALPPITGAIIGYFTNDIAIKMLFRPYKARYIFKRRLPFTPGLIPRNQERLAKRVSDTIMGSLLTPEEIQNLARRLLKTERVQSAILWLLQLAIKQIRADKEQKTAKILAGILSDLFGQSLPRLLKVLARRDDFLEAQINQIFDRILLEFRLTDLQARQLADWLLDTVISPDILRQLLIDFLTDRNIQVIDEGFREKTSGTYWVVANIFGLRNTLTRLRTFCLDEKETANTRLKELLLSLEMRTRLREWLQNLSLQNLPISTVRQLRKTTRDTVRSYIQQSGAQFLQDFNQSIDWEKLAIVVVNRLQASTVVTDSLEMISQELALILERYLEEDLERIVSQAIPILSIDQIIIEKIVATSPKELEAATEGIVKNELQAIVNLGGILGFFVGTIQTVILLLR</sequence>
<reference key="1">
    <citation type="journal article" date="2011" name="MBio">
        <title>Novel metabolic attributes of the genus Cyanothece, comprising a group of unicellular nitrogen-fixing Cyanobacteria.</title>
        <authorList>
            <person name="Bandyopadhyay A."/>
            <person name="Elvitigala T."/>
            <person name="Welsh E."/>
            <person name="Stockel J."/>
            <person name="Liberton M."/>
            <person name="Min H."/>
            <person name="Sherman L.A."/>
            <person name="Pakrasi H.B."/>
        </authorList>
    </citation>
    <scope>NUCLEOTIDE SEQUENCE [LARGE SCALE GENOMIC DNA]</scope>
    <source>
        <strain>PCC 7424</strain>
    </source>
</reference>
<keyword id="KW-0997">Cell inner membrane</keyword>
<keyword id="KW-1003">Cell membrane</keyword>
<keyword id="KW-0472">Membrane</keyword>
<keyword id="KW-1185">Reference proteome</keyword>
<keyword id="KW-0812">Transmembrane</keyword>
<keyword id="KW-1133">Transmembrane helix</keyword>
<organism>
    <name type="scientific">Gloeothece citriformis (strain PCC 7424)</name>
    <name type="common">Cyanothece sp. (strain PCC 7424)</name>
    <dbReference type="NCBI Taxonomy" id="65393"/>
    <lineage>
        <taxon>Bacteria</taxon>
        <taxon>Bacillati</taxon>
        <taxon>Cyanobacteriota</taxon>
        <taxon>Cyanophyceae</taxon>
        <taxon>Oscillatoriophycideae</taxon>
        <taxon>Chroococcales</taxon>
        <taxon>Aphanothecaceae</taxon>
        <taxon>Gloeothece</taxon>
        <taxon>Gloeothece citriformis</taxon>
    </lineage>
</organism>
<gene>
    <name type="ordered locus">PCC7424_0748</name>
</gene>